<evidence type="ECO:0000250" key="1">
    <source>
        <dbReference type="UniProtKB" id="P21549"/>
    </source>
</evidence>
<evidence type="ECO:0000250" key="2">
    <source>
        <dbReference type="UniProtKB" id="Q7PRG3"/>
    </source>
</evidence>
<evidence type="ECO:0000255" key="3">
    <source>
        <dbReference type="PIRNR" id="PIRNR000524"/>
    </source>
</evidence>
<evidence type="ECO:0000255" key="4">
    <source>
        <dbReference type="PIRSR" id="PIRSR000524-50"/>
    </source>
</evidence>
<evidence type="ECO:0000269" key="5">
    <source>
    </source>
</evidence>
<evidence type="ECO:0000269" key="6">
    <source>
    </source>
</evidence>
<evidence type="ECO:0000269" key="7">
    <source ref="4"/>
</evidence>
<evidence type="ECO:0000303" key="8">
    <source>
    </source>
</evidence>
<evidence type="ECO:0000303" key="9">
    <source>
    </source>
</evidence>
<evidence type="ECO:0000305" key="10"/>
<evidence type="ECO:0000305" key="11">
    <source>
    </source>
</evidence>
<evidence type="ECO:0000305" key="12">
    <source>
    </source>
</evidence>
<evidence type="ECO:0000312" key="13">
    <source>
        <dbReference type="EMBL" id="AAL29468.1"/>
    </source>
</evidence>
<evidence type="ECO:0000312" key="14">
    <source>
        <dbReference type="EMBL" id="EAT45177.1"/>
    </source>
</evidence>
<evidence type="ECO:0007744" key="15">
    <source>
        <dbReference type="PDB" id="6MFB"/>
    </source>
</evidence>
<evidence type="ECO:0007829" key="16">
    <source>
        <dbReference type="PDB" id="6MFB"/>
    </source>
</evidence>
<organism evidence="14">
    <name type="scientific">Aedes aegypti</name>
    <name type="common">Yellowfever mosquito</name>
    <name type="synonym">Culex aegypti</name>
    <dbReference type="NCBI Taxonomy" id="7159"/>
    <lineage>
        <taxon>Eukaryota</taxon>
        <taxon>Metazoa</taxon>
        <taxon>Ecdysozoa</taxon>
        <taxon>Arthropoda</taxon>
        <taxon>Hexapoda</taxon>
        <taxon>Insecta</taxon>
        <taxon>Pterygota</taxon>
        <taxon>Neoptera</taxon>
        <taxon>Endopterygota</taxon>
        <taxon>Diptera</taxon>
        <taxon>Nematocera</taxon>
        <taxon>Culicoidea</taxon>
        <taxon>Culicidae</taxon>
        <taxon>Culicinae</taxon>
        <taxon>Aedini</taxon>
        <taxon>Aedes</taxon>
        <taxon>Stegomyia</taxon>
    </lineage>
</organism>
<name>HKT_AEDAE</name>
<proteinExistence type="evidence at protein level"/>
<protein>
    <recommendedName>
        <fullName evidence="8">3-hydroxykynurenine transaminase</fullName>
        <ecNumber evidence="5 6">2.6.1.63</ecNumber>
    </recommendedName>
    <alternativeName>
        <fullName evidence="9">3-hydroxykynurenine transaminase and alanine--glyoxylate aminotransferase</fullName>
        <shortName evidence="9">Ae-HKT/AGT</shortName>
    </alternativeName>
    <alternativeName>
        <fullName evidence="3">Alanine--glyoxylate aminotransferase</fullName>
        <ecNumber evidence="3 5 6">2.6.1.44</ecNumber>
    </alternativeName>
</protein>
<sequence length="400" mass="44691">MKFTPPPSSLRGPLVIPDKIMMGPGPSNCSKRVLAALNNTCLSNFHDELFQVIDEVKDGLRYIFQTENRTTMCITGSAHTGMEALLCNLLEEGDIVLIANNGIWAERAINMATRYGADVRVLGGPADKPFSMTDFKKAIEQHRPKCLFVVHGDSSSGLLQPLEGLGKICHDYDCLLLVDAVASLCGVPFYMDKWEIDGVYTGSQKVLGAPPGITPISISPKALEVIRSRKTPSKVFYWDLLILGNYWGCYDEQKRYHHTVPSNLIFALREAIAQIAEEGLEPVIRRRQECAEQMYRGLQAMGLEIFVKDPEYRLPTVTCIMIPKGVNWWKVSEYAMNNFSLEIQGGFGPTMGIAWRAGIMGESSTLQRVNFYLYAFKESLKATHPDYVFEKKNGQTNGTK</sequence>
<gene>
    <name evidence="8" type="primary">HKT</name>
    <name evidence="14" type="ORF">AAEL003508</name>
</gene>
<reference evidence="14" key="1">
    <citation type="journal article" date="2007" name="Science">
        <title>Genome sequence of Aedes aegypti, a major arbovirus vector.</title>
        <authorList>
            <person name="Nene V."/>
            <person name="Wortman J.R."/>
            <person name="Lawson D."/>
            <person name="Haas B.J."/>
            <person name="Kodira C.D."/>
            <person name="Tu Z.J."/>
            <person name="Loftus B.J."/>
            <person name="Xi Z."/>
            <person name="Megy K."/>
            <person name="Grabherr M."/>
            <person name="Ren Q."/>
            <person name="Zdobnov E.M."/>
            <person name="Lobo N.F."/>
            <person name="Campbell K.S."/>
            <person name="Brown S.E."/>
            <person name="Bonaldo M.F."/>
            <person name="Zhu J."/>
            <person name="Sinkins S.P."/>
            <person name="Hogenkamp D.G."/>
            <person name="Amedeo P."/>
            <person name="Arensburger P."/>
            <person name="Atkinson P.W."/>
            <person name="Bidwell S.L."/>
            <person name="Biedler J."/>
            <person name="Birney E."/>
            <person name="Bruggner R.V."/>
            <person name="Costas J."/>
            <person name="Coy M.R."/>
            <person name="Crabtree J."/>
            <person name="Crawford M."/>
            <person name="DeBruyn B."/>
            <person name="DeCaprio D."/>
            <person name="Eiglmeier K."/>
            <person name="Eisenstadt E."/>
            <person name="El-Dorry H."/>
            <person name="Gelbart W.M."/>
            <person name="Gomes S.L."/>
            <person name="Hammond M."/>
            <person name="Hannick L.I."/>
            <person name="Hogan J.R."/>
            <person name="Holmes M.H."/>
            <person name="Jaffe D."/>
            <person name="Johnston S.J."/>
            <person name="Kennedy R.C."/>
            <person name="Koo H."/>
            <person name="Kravitz S."/>
            <person name="Kriventseva E.V."/>
            <person name="Kulp D."/>
            <person name="Labutti K."/>
            <person name="Lee E."/>
            <person name="Li S."/>
            <person name="Lovin D.D."/>
            <person name="Mao C."/>
            <person name="Mauceli E."/>
            <person name="Menck C.F."/>
            <person name="Miller J.R."/>
            <person name="Montgomery P."/>
            <person name="Mori A."/>
            <person name="Nascimento A.L."/>
            <person name="Naveira H.F."/>
            <person name="Nusbaum C."/>
            <person name="O'Leary S.B."/>
            <person name="Orvis J."/>
            <person name="Pertea M."/>
            <person name="Quesneville H."/>
            <person name="Reidenbach K.R."/>
            <person name="Rogers Y.-H.C."/>
            <person name="Roth C.W."/>
            <person name="Schneider J.R."/>
            <person name="Schatz M."/>
            <person name="Shumway M."/>
            <person name="Stanke M."/>
            <person name="Stinson E.O."/>
            <person name="Tubio J.M.C."/>
            <person name="Vanzee J.P."/>
            <person name="Verjovski-Almeida S."/>
            <person name="Werner D."/>
            <person name="White O.R."/>
            <person name="Wyder S."/>
            <person name="Zeng Q."/>
            <person name="Zhao Q."/>
            <person name="Zhao Y."/>
            <person name="Hill C.A."/>
            <person name="Raikhel A.S."/>
            <person name="Soares M.B."/>
            <person name="Knudson D.L."/>
            <person name="Lee N.H."/>
            <person name="Galagan J."/>
            <person name="Salzberg S.L."/>
            <person name="Paulsen I.T."/>
            <person name="Dimopoulos G."/>
            <person name="Collins F.H."/>
            <person name="Bruce B."/>
            <person name="Fraser-Liggett C.M."/>
            <person name="Severson D.W."/>
        </authorList>
    </citation>
    <scope>NUCLEOTIDE SEQUENCE [LARGE SCALE GENOMIC DNA]</scope>
    <source>
        <strain evidence="14">Liverpool</strain>
    </source>
</reference>
<reference evidence="13" key="2">
    <citation type="journal article" date="2002" name="J. Biol. Chem.">
        <title>3-Hydroxykynurenine transaminase identity with alanine glyoxylate transaminase. A probable detoxification protein in Aedes aegypti.</title>
        <authorList>
            <person name="Han Q."/>
            <person name="Fang J."/>
            <person name="Li J."/>
        </authorList>
    </citation>
    <scope>NUCLEOTIDE SEQUENCE [MRNA] OF 1-389</scope>
    <scope>PROTEIN SEQUENCE OF 1-19; 108-114; 121-130 AND 302-308</scope>
    <scope>FUNCTION</scope>
    <scope>CATALYTIC ACTIVITY</scope>
    <scope>BIOPHYSICOCHEMICAL PROPERTIES</scope>
    <scope>PATHWAY</scope>
    <scope>DEVELOPMENTAL STAGE</scope>
    <source>
        <strain evidence="13">Black-eyed Liverpool</strain>
    </source>
</reference>
<reference evidence="10" key="3">
    <citation type="journal article" date="2002" name="FEBS Lett.">
        <title>Comparative characterization of Aedes 3-hydroxykynurenine transaminase/alanine glyoxylate transaminase and Drosophila serine pyruvate aminotransferase.</title>
        <authorList>
            <person name="Han Q."/>
            <person name="Li J."/>
        </authorList>
    </citation>
    <scope>FUNCTION</scope>
    <scope>CATALYTIC ACTIVITY</scope>
    <scope>BIOPHYSICOCHEMICAL PROPERTIES</scope>
    <scope>PATHWAY</scope>
    <scope>SUBUNIT</scope>
</reference>
<reference evidence="15" key="4">
    <citation type="submission" date="2018-09" db="PDB data bank">
        <title>Crystal structure of 3-hydroxykynurenine transaminase from Aedes aegypti.</title>
        <authorList>
            <person name="Maciel L.G."/>
            <person name="Oliveira A.A."/>
            <person name="Romao T.P."/>
            <person name="Silva Filha M.H.N.L."/>
            <person name="dos Anjos J.V."/>
            <person name="Soares T.A."/>
            <person name="Guido R.V.C."/>
        </authorList>
    </citation>
    <scope>X-RAY CRYSTALLOGRAPHY (2.50 ANGSTROMS) OF 1-386 IN COMPLEX WITH PYRIDOXAL PHOSPHATE</scope>
</reference>
<feature type="chain" id="PRO_0000452185" description="3-hydroxykynurenine transaminase">
    <location>
        <begin position="1"/>
        <end position="400"/>
    </location>
</feature>
<feature type="region of interest" description="Binds to and confers specificity for 3-hydroxykynurenine; shared with dimeric partner" evidence="2">
    <location>
        <begin position="43"/>
        <end position="44"/>
    </location>
</feature>
<feature type="binding site" description="in other chain" evidence="7 15">
    <location>
        <begin position="77"/>
        <end position="79"/>
    </location>
    <ligand>
        <name>pyridoxal 5'-phosphate</name>
        <dbReference type="ChEBI" id="CHEBI:597326"/>
        <note>ligand shared between dimeric partners</note>
    </ligand>
</feature>
<feature type="binding site" description="in other chain" evidence="7 15">
    <location>
        <position position="154"/>
    </location>
    <ligand>
        <name>pyridoxal 5'-phosphate</name>
        <dbReference type="ChEBI" id="CHEBI:597326"/>
        <note>ligand shared between dimeric partners</note>
    </ligand>
</feature>
<feature type="binding site" evidence="2">
    <location>
        <position position="154"/>
    </location>
    <ligand>
        <name>substrate</name>
    </ligand>
</feature>
<feature type="binding site" description="in other chain" evidence="7 15">
    <location>
        <position position="204"/>
    </location>
    <ligand>
        <name>pyridoxal 5'-phosphate</name>
        <dbReference type="ChEBI" id="CHEBI:597326"/>
        <note>ligand shared between dimeric partners</note>
    </ligand>
</feature>
<feature type="binding site" evidence="7 15">
    <location>
        <position position="256"/>
    </location>
    <ligand>
        <name>pyridoxal 5'-phosphate</name>
        <dbReference type="ChEBI" id="CHEBI:597326"/>
        <note>ligand shared between dimeric partners</note>
    </ligand>
</feature>
<feature type="binding site" evidence="7 15">
    <location>
        <position position="259"/>
    </location>
    <ligand>
        <name>pyridoxal 5'-phosphate</name>
        <dbReference type="ChEBI" id="CHEBI:597326"/>
        <note>ligand shared between dimeric partners</note>
    </ligand>
</feature>
<feature type="binding site" evidence="2">
    <location>
        <position position="356"/>
    </location>
    <ligand>
        <name>substrate</name>
    </ligand>
</feature>
<feature type="modified residue" description="N6-(pyridoxal phosphate)lysine" evidence="4 7 15">
    <location>
        <position position="205"/>
    </location>
</feature>
<feature type="sequence conflict" description="In Ref. 2; AAL29468." evidence="10" ref="2">
    <original>G</original>
    <variation>E</variation>
    <location>
        <position position="123"/>
    </location>
</feature>
<feature type="helix" evidence="16">
    <location>
        <begin position="8"/>
        <end position="10"/>
    </location>
</feature>
<feature type="strand" evidence="16">
    <location>
        <begin position="23"/>
        <end position="26"/>
    </location>
</feature>
<feature type="helix" evidence="16">
    <location>
        <begin position="31"/>
        <end position="35"/>
    </location>
</feature>
<feature type="helix" evidence="16">
    <location>
        <begin position="47"/>
        <end position="64"/>
    </location>
</feature>
<feature type="strand" evidence="16">
    <location>
        <begin position="71"/>
        <end position="76"/>
    </location>
</feature>
<feature type="helix" evidence="16">
    <location>
        <begin position="79"/>
        <end position="89"/>
    </location>
</feature>
<feature type="strand" evidence="16">
    <location>
        <begin position="95"/>
        <end position="102"/>
    </location>
</feature>
<feature type="helix" evidence="16">
    <location>
        <begin position="103"/>
        <end position="114"/>
    </location>
</feature>
<feature type="strand" evidence="16">
    <location>
        <begin position="118"/>
        <end position="123"/>
    </location>
</feature>
<feature type="helix" evidence="16">
    <location>
        <begin position="132"/>
        <end position="142"/>
    </location>
</feature>
<feature type="strand" evidence="16">
    <location>
        <begin position="145"/>
        <end position="152"/>
    </location>
</feature>
<feature type="turn" evidence="16">
    <location>
        <begin position="154"/>
        <end position="156"/>
    </location>
</feature>
<feature type="helix" evidence="16">
    <location>
        <begin position="165"/>
        <end position="171"/>
    </location>
</feature>
<feature type="strand" evidence="16">
    <location>
        <begin position="175"/>
        <end position="179"/>
    </location>
</feature>
<feature type="turn" evidence="16">
    <location>
        <begin position="181"/>
        <end position="186"/>
    </location>
</feature>
<feature type="turn" evidence="16">
    <location>
        <begin position="191"/>
        <end position="195"/>
    </location>
</feature>
<feature type="strand" evidence="16">
    <location>
        <begin position="197"/>
        <end position="200"/>
    </location>
</feature>
<feature type="turn" evidence="16">
    <location>
        <begin position="203"/>
        <end position="207"/>
    </location>
</feature>
<feature type="strand" evidence="16">
    <location>
        <begin position="211"/>
        <end position="218"/>
    </location>
</feature>
<feature type="helix" evidence="16">
    <location>
        <begin position="220"/>
        <end position="228"/>
    </location>
</feature>
<feature type="helix" evidence="16">
    <location>
        <begin position="236"/>
        <end position="238"/>
    </location>
</feature>
<feature type="helix" evidence="16">
    <location>
        <begin position="240"/>
        <end position="246"/>
    </location>
</feature>
<feature type="strand" evidence="16">
    <location>
        <begin position="250"/>
        <end position="252"/>
    </location>
</feature>
<feature type="helix" evidence="16">
    <location>
        <begin position="262"/>
        <end position="278"/>
    </location>
</feature>
<feature type="helix" evidence="16">
    <location>
        <begin position="280"/>
        <end position="300"/>
    </location>
</feature>
<feature type="strand" evidence="16">
    <location>
        <begin position="305"/>
        <end position="307"/>
    </location>
</feature>
<feature type="helix" evidence="16">
    <location>
        <begin position="310"/>
        <end position="312"/>
    </location>
</feature>
<feature type="strand" evidence="16">
    <location>
        <begin position="317"/>
        <end position="321"/>
    </location>
</feature>
<feature type="helix" evidence="16">
    <location>
        <begin position="328"/>
        <end position="339"/>
    </location>
</feature>
<feature type="helix" evidence="16">
    <location>
        <begin position="348"/>
        <end position="350"/>
    </location>
</feature>
<feature type="turn" evidence="16">
    <location>
        <begin position="351"/>
        <end position="353"/>
    </location>
</feature>
<feature type="strand" evidence="16">
    <location>
        <begin position="354"/>
        <end position="358"/>
    </location>
</feature>
<feature type="helix" evidence="16">
    <location>
        <begin position="366"/>
        <end position="383"/>
    </location>
</feature>
<accession>Q0IG34</accession>
<accession>Q95V15</accession>
<comment type="function">
    <text evidence="5 6 11 12">Catalyzes the pyridoxal 5'-phosphate-dependent transamination of both 3-hydroxykynurenine and L-kynurenine to xanthurenic acid and kynurenic acid, respectively, preferentially using the alpha-ketoacid pyruvate, glyoxylate or oxaloacetate as the amino group acceptor (PubMed:11880382, PubMed:12220660). The affinity and catalytic efficiency for 3-hydroxykynurenine is higher than for L-kynurenine (PubMed:12220660). Involved in the detoxification of cytotoxic metabolite 3-hydroxykynurenine generated by the hydroxylation of L-kynurenine, an intermediate in the tryptophan catabolism pathway (PubMed:11880382, PubMed:12220660). Also catalyzes, although with a lesser efficiency, the transamination of alanine with glyoxylate as an amino group acceptor (PubMed:11880382). May play a role in the detoxification of glyoxylate, a toxic plant metabolite from the diet (Probable).</text>
</comment>
<comment type="catalytic activity">
    <reaction evidence="3 5 6">
        <text>glyoxylate + L-alanine = glycine + pyruvate</text>
        <dbReference type="Rhea" id="RHEA:24248"/>
        <dbReference type="ChEBI" id="CHEBI:15361"/>
        <dbReference type="ChEBI" id="CHEBI:36655"/>
        <dbReference type="ChEBI" id="CHEBI:57305"/>
        <dbReference type="ChEBI" id="CHEBI:57972"/>
        <dbReference type="EC" id="2.6.1.44"/>
    </reaction>
</comment>
<comment type="catalytic activity">
    <reaction evidence="5 6">
        <text>L-kynurenine + glyoxylate = kynurenate + glycine + H2O</text>
        <dbReference type="Rhea" id="RHEA:65896"/>
        <dbReference type="ChEBI" id="CHEBI:15377"/>
        <dbReference type="ChEBI" id="CHEBI:36655"/>
        <dbReference type="ChEBI" id="CHEBI:57305"/>
        <dbReference type="ChEBI" id="CHEBI:57959"/>
        <dbReference type="ChEBI" id="CHEBI:58454"/>
        <dbReference type="EC" id="2.6.1.63"/>
    </reaction>
</comment>
<comment type="catalytic activity">
    <reaction evidence="5 6">
        <text>3-hydroxy-L-kynurenine + glyoxylate = xanthurenate + glycine + H2O</text>
        <dbReference type="Rhea" id="RHEA:65900"/>
        <dbReference type="ChEBI" id="CHEBI:15377"/>
        <dbReference type="ChEBI" id="CHEBI:36655"/>
        <dbReference type="ChEBI" id="CHEBI:57305"/>
        <dbReference type="ChEBI" id="CHEBI:58125"/>
        <dbReference type="ChEBI" id="CHEBI:71201"/>
        <dbReference type="EC" id="2.6.1.63"/>
    </reaction>
</comment>
<comment type="catalytic activity">
    <reaction evidence="5 6">
        <text>3-hydroxy-L-kynurenine + pyruvate = xanthurenate + L-alanine + H2O</text>
        <dbReference type="Rhea" id="RHEA:65908"/>
        <dbReference type="ChEBI" id="CHEBI:15361"/>
        <dbReference type="ChEBI" id="CHEBI:15377"/>
        <dbReference type="ChEBI" id="CHEBI:57972"/>
        <dbReference type="ChEBI" id="CHEBI:58125"/>
        <dbReference type="ChEBI" id="CHEBI:71201"/>
    </reaction>
</comment>
<comment type="catalytic activity">
    <reaction evidence="5 6">
        <text>L-kynurenine + pyruvate = kynurenate + L-alanine + H2O</text>
        <dbReference type="Rhea" id="RHEA:65916"/>
        <dbReference type="ChEBI" id="CHEBI:15361"/>
        <dbReference type="ChEBI" id="CHEBI:15377"/>
        <dbReference type="ChEBI" id="CHEBI:57959"/>
        <dbReference type="ChEBI" id="CHEBI:57972"/>
        <dbReference type="ChEBI" id="CHEBI:58454"/>
    </reaction>
</comment>
<comment type="catalytic activity">
    <reaction evidence="6">
        <text>2-oxobutanoate + L-alanine = (2S)-2-aminobutanoate + pyruvate</text>
        <dbReference type="Rhea" id="RHEA:77355"/>
        <dbReference type="ChEBI" id="CHEBI:15361"/>
        <dbReference type="ChEBI" id="CHEBI:16763"/>
        <dbReference type="ChEBI" id="CHEBI:57972"/>
        <dbReference type="ChEBI" id="CHEBI:74359"/>
    </reaction>
</comment>
<comment type="catalytic activity">
    <reaction evidence="6">
        <text>L-phenylalanine + pyruvate = 3-phenylpyruvate + L-alanine</text>
        <dbReference type="Rhea" id="RHEA:13053"/>
        <dbReference type="ChEBI" id="CHEBI:15361"/>
        <dbReference type="ChEBI" id="CHEBI:18005"/>
        <dbReference type="ChEBI" id="CHEBI:57972"/>
        <dbReference type="ChEBI" id="CHEBI:58095"/>
    </reaction>
</comment>
<comment type="catalytic activity">
    <reaction evidence="6">
        <text>L-serine + pyruvate = 3-hydroxypyruvate + L-alanine</text>
        <dbReference type="Rhea" id="RHEA:22852"/>
        <dbReference type="ChEBI" id="CHEBI:15361"/>
        <dbReference type="ChEBI" id="CHEBI:17180"/>
        <dbReference type="ChEBI" id="CHEBI:33384"/>
        <dbReference type="ChEBI" id="CHEBI:57972"/>
    </reaction>
</comment>
<comment type="catalytic activity">
    <reaction evidence="6">
        <text>L-cysteine + pyruvate = 2-oxo-3-sulfanylpropanoate + L-alanine</text>
        <dbReference type="Rhea" id="RHEA:82415"/>
        <dbReference type="ChEBI" id="CHEBI:15361"/>
        <dbReference type="ChEBI" id="CHEBI:35235"/>
        <dbReference type="ChEBI" id="CHEBI:57678"/>
        <dbReference type="ChEBI" id="CHEBI:57972"/>
    </reaction>
</comment>
<comment type="catalytic activity">
    <reaction evidence="6">
        <text>3-hydroxy-L-kynurenine + oxaloacetate = 4-(2-amino-3-hydroxyphenyl)-2,4-dioxobutanoate + L-aspartate</text>
        <dbReference type="Rhea" id="RHEA:82427"/>
        <dbReference type="ChEBI" id="CHEBI:16452"/>
        <dbReference type="ChEBI" id="CHEBI:29991"/>
        <dbReference type="ChEBI" id="CHEBI:58125"/>
        <dbReference type="ChEBI" id="CHEBI:157756"/>
    </reaction>
</comment>
<comment type="catalytic activity">
    <reaction evidence="6">
        <text>3-hydroxy-L-kynurenine + 3-phenylpyruvate = 4-(2-amino-3-hydroxyphenyl)-2,4-dioxobutanoate + L-phenylalanine</text>
        <dbReference type="Rhea" id="RHEA:82431"/>
        <dbReference type="ChEBI" id="CHEBI:18005"/>
        <dbReference type="ChEBI" id="CHEBI:58095"/>
        <dbReference type="ChEBI" id="CHEBI:58125"/>
        <dbReference type="ChEBI" id="CHEBI:157756"/>
    </reaction>
</comment>
<comment type="catalytic activity">
    <reaction evidence="6">
        <text>L-kynurenine + oxaloacetate = 4-(2-aminophenyl)-2,4-dioxobutanoate + L-aspartate</text>
        <dbReference type="Rhea" id="RHEA:66088"/>
        <dbReference type="ChEBI" id="CHEBI:16452"/>
        <dbReference type="ChEBI" id="CHEBI:29991"/>
        <dbReference type="ChEBI" id="CHEBI:57959"/>
        <dbReference type="ChEBI" id="CHEBI:58147"/>
    </reaction>
</comment>
<comment type="catalytic activity">
    <reaction evidence="6">
        <text>3-phenylpyruvate + L-kynurenine = 4-(2-aminophenyl)-2,4-dioxobutanoate + L-phenylalanine</text>
        <dbReference type="Rhea" id="RHEA:66096"/>
        <dbReference type="ChEBI" id="CHEBI:18005"/>
        <dbReference type="ChEBI" id="CHEBI:57959"/>
        <dbReference type="ChEBI" id="CHEBI:58095"/>
        <dbReference type="ChEBI" id="CHEBI:58147"/>
    </reaction>
</comment>
<comment type="cofactor">
    <cofactor evidence="4 7">
        <name>pyridoxal 5'-phosphate</name>
        <dbReference type="ChEBI" id="CHEBI:597326"/>
    </cofactor>
</comment>
<comment type="biophysicochemical properties">
    <kinetics>
        <KM evidence="5">3.7 mM for 3-hydroxykynurenine (at 50 degrees Celsius and pH 7.0)</KM>
        <KM evidence="5">11.2 mM for L-alanine (at 50 degrees Celsius, pH 7.0 and with glyoxylate as cosubstrate)</KM>
        <KM evidence="6">18 mM for alanine (at 50 degrees Celsius, pH 7.0 and with glyoxylate as cosubstrate)</KM>
        <KM evidence="5">22.8 mM for L,D-alanine (at 50 degrees Celsius, pH 7.0 and with glyoxylate as cosubstrate)</KM>
        <KM evidence="6">1.6 mM for glyoxylate (at 50 degrees Celsius, pH 7.0 and with alanine as cosubstrate)</KM>
        <KM evidence="5">6.2 mM for L-kynurenine (at 50 degrees Celsius and pH 7.0)</KM>
        <KM evidence="5">10 mM for L,D-kynurenine (at 50 degrees Celsius and pH 7.0)</KM>
        <Vmax evidence="5">60.6 umol/min/mg enzyme toward 3-hydroxykynurenine (at 50 degrees Celsius and pH 7.0)</Vmax>
        <Vmax evidence="5">41.0 umol/min/mg enzyme toward L-alanine (at 50 degrees Celsius, pH 7.0 and with glyoxylate as cosubstrate)</Vmax>
        <Vmax evidence="6">30.0 umol/min/mg enzyme toward alanine (at 50 degrees Celsius, pH 7.0 and with glyoxylate as cosubstrate)</Vmax>
        <Vmax evidence="5">41.6 umol/min/mg enzyme toward L,D-alanine (at 50 degrees Celsius, pH 7.0 and with glyoxylate as cosubstrate)</Vmax>
        <Vmax evidence="6">24.0 umol/min/mg enzyme toward glyoxylate (at 50 degrees Celsius, pH 7.0 and with alanine as cosubstrate)</Vmax>
        <Vmax evidence="5">24.0 umol/min/mg enzyme toward L-kynurenine (at 50 degrees Celsius and pH 7.0)</Vmax>
        <Vmax evidence="5">18.0 umol/min/mg enzyme toward L-kynurenine (at 50 degrees Celsius and pH 7.0)</Vmax>
        <text evidence="5 6">kcat is 2424 min(-1) for 3-hydroxykynurenine (at 50 degrees Celsius and pH 7) (PubMed:11880382). kcat is 1640 min(-1) for L-alanine (at 50 degrees Celsius, pH 7.0 and with glyoxylate as cosubstrate) (PubMed:11880382). kcat is 1200 min(-1) for alanine (at 50 degrees Celsius, pH 7.0 and with glyoxylate as cosubstrate) (PubMed:12220660). kcat is 1664 min(-1) for L,D-alanine (at 50 degrees Celsius, pH 7.0 and with glyoxylate as cosubstrate) (PubMed:11880382). kcat is 960 min(-1) for glyoxylate (at 50 degrees Celsius, pH 7.0 and with alanine as cosubstrate) (PubMed:12220660). kcat is 960 min(-1) for L-kynurenine (at 50 degrees Celsius and pH 7.0) (PubMed:11880382). kcat is 720 min(-1) for L,D-kynurenine (at 50 degrees Celsius and pH 7.0) (PubMed:11880382).</text>
    </kinetics>
    <phDependence>
        <text evidence="5 6">Optimum pH is 9 with 3-hydroxykynurenine and pyruvate, or L-alanine and glyoxylate as substrates (at 50 degrees Celsius).</text>
    </phDependence>
    <temperatureDependence>
        <text evidence="5 6">Optimum temperature is 55 degrees Celsius with 3-hydroxykynurenine and pyruvate at pH 7 (PubMed:11880382, PubMed:12220660). Optimum temperature is 60 degrees Celsius with L-alanine and glyoxylate at pH 7 (PubMed:11880382, PubMed:12220660).</text>
    </temperatureDependence>
</comment>
<comment type="pathway">
    <text evidence="5 6">Amino-acid degradation; L-kynurenine degradation; kynurenate from L-kynurenine: step 1/2.</text>
</comment>
<comment type="subunit">
    <text evidence="2 6">Homodimer (By similarity). May form homotetramer (PubMed:12220660).</text>
</comment>
<comment type="subcellular location">
    <subcellularLocation>
        <location evidence="1">Peroxisome</location>
    </subcellularLocation>
</comment>
<comment type="developmental stage">
    <text evidence="5">Expressed in developing ovaries and larvae (PubMed:11880382). Expression increases from 1- to 4-day-old larvae, decreases in 5- and 6-day-old larvae and newly formed pupae, and becomes undetectable in 12-hour-pupae (PubMed:11880382).</text>
</comment>
<comment type="similarity">
    <text evidence="3">Belongs to the class-V pyridoxal-phosphate-dependent aminotransferase family.</text>
</comment>
<comment type="sequence caution" evidence="10">
    <conflict type="frameshift">
        <sequence resource="EMBL-CDS" id="AAL29468"/>
    </conflict>
</comment>
<keyword id="KW-0002">3D-structure</keyword>
<keyword id="KW-0032">Aminotransferase</keyword>
<keyword id="KW-0903">Direct protein sequencing</keyword>
<keyword id="KW-0576">Peroxisome</keyword>
<keyword id="KW-0663">Pyridoxal phosphate</keyword>
<keyword id="KW-1185">Reference proteome</keyword>
<keyword id="KW-0808">Transferase</keyword>
<dbReference type="EC" id="2.6.1.63" evidence="5 6"/>
<dbReference type="EC" id="2.6.1.44" evidence="3 5 6"/>
<dbReference type="EMBL" id="CH477274">
    <property type="protein sequence ID" value="EAT45177.1"/>
    <property type="molecule type" value="Genomic_DNA"/>
</dbReference>
<dbReference type="EMBL" id="CH477274">
    <property type="protein sequence ID" value="EAT45178.1"/>
    <property type="molecule type" value="Genomic_DNA"/>
</dbReference>
<dbReference type="EMBL" id="AF435806">
    <property type="protein sequence ID" value="AAL29468.1"/>
    <property type="status" value="ALT_FRAME"/>
    <property type="molecule type" value="mRNA"/>
</dbReference>
<dbReference type="RefSeq" id="XP_001656923.1">
    <property type="nucleotide sequence ID" value="XM_001656873.1"/>
</dbReference>
<dbReference type="RefSeq" id="XP_001656924.1">
    <property type="nucleotide sequence ID" value="XM_001656874.1"/>
</dbReference>
<dbReference type="PDB" id="6MFB">
    <property type="method" value="X-ray"/>
    <property type="resolution" value="2.50 A"/>
    <property type="chains" value="A/B/C/D=1-386"/>
</dbReference>
<dbReference type="PDBsum" id="6MFB"/>
<dbReference type="SMR" id="Q0IG34"/>
<dbReference type="STRING" id="7159.Q0IG34"/>
<dbReference type="ChEMBL" id="CHEMBL4739684"/>
<dbReference type="PaxDb" id="7159-AAEL003508-PB"/>
<dbReference type="GeneID" id="5578354"/>
<dbReference type="KEGG" id="aag:5578354"/>
<dbReference type="VEuPathDB" id="VectorBase:AAEL003508"/>
<dbReference type="eggNOG" id="KOG2862">
    <property type="taxonomic scope" value="Eukaryota"/>
</dbReference>
<dbReference type="HOGENOM" id="CLU_027686_0_0_1"/>
<dbReference type="InParanoid" id="Q0IG34"/>
<dbReference type="OMA" id="MFSHRWI"/>
<dbReference type="OrthoDB" id="7403325at2759"/>
<dbReference type="PhylomeDB" id="Q0IG34"/>
<dbReference type="UniPathway" id="UPA00334">
    <property type="reaction ID" value="UER00726"/>
</dbReference>
<dbReference type="Proteomes" id="UP000008820">
    <property type="component" value="Unplaced"/>
</dbReference>
<dbReference type="Proteomes" id="UP000682892">
    <property type="component" value="Chromosome 1"/>
</dbReference>
<dbReference type="GO" id="GO:0005777">
    <property type="term" value="C:peroxisome"/>
    <property type="evidence" value="ECO:0007669"/>
    <property type="project" value="UniProtKB-SubCell"/>
</dbReference>
<dbReference type="GO" id="GO:0008453">
    <property type="term" value="F:alanine-glyoxylate transaminase activity"/>
    <property type="evidence" value="ECO:0000314"/>
    <property type="project" value="UniProtKB"/>
</dbReference>
<dbReference type="GO" id="GO:0047315">
    <property type="term" value="F:kynurenine-glyoxylate transaminase activity"/>
    <property type="evidence" value="ECO:0000314"/>
    <property type="project" value="UniProtKB"/>
</dbReference>
<dbReference type="GO" id="GO:0004760">
    <property type="term" value="F:L-serine-pyruvate transaminase activity"/>
    <property type="evidence" value="ECO:0007669"/>
    <property type="project" value="TreeGrafter"/>
</dbReference>
<dbReference type="GO" id="GO:0019265">
    <property type="term" value="P:glycine biosynthetic process, by transamination of glyoxylate"/>
    <property type="evidence" value="ECO:0007669"/>
    <property type="project" value="TreeGrafter"/>
</dbReference>
<dbReference type="GO" id="GO:0009436">
    <property type="term" value="P:glyoxylate catabolic process"/>
    <property type="evidence" value="ECO:0000314"/>
    <property type="project" value="UniProtKB"/>
</dbReference>
<dbReference type="GO" id="GO:0097053">
    <property type="term" value="P:L-kynurenine catabolic process"/>
    <property type="evidence" value="ECO:0000314"/>
    <property type="project" value="UniProtKB"/>
</dbReference>
<dbReference type="CDD" id="cd06451">
    <property type="entry name" value="AGAT_like"/>
    <property type="match status" value="1"/>
</dbReference>
<dbReference type="FunFam" id="3.90.1150.10:FF:000039">
    <property type="entry name" value="Serine--pyruvate aminotransferase"/>
    <property type="match status" value="1"/>
</dbReference>
<dbReference type="FunFam" id="3.40.640.10:FF:000027">
    <property type="entry name" value="Serine--pyruvate aminotransferase, mitochondrial"/>
    <property type="match status" value="1"/>
</dbReference>
<dbReference type="Gene3D" id="3.90.1150.10">
    <property type="entry name" value="Aspartate Aminotransferase, domain 1"/>
    <property type="match status" value="1"/>
</dbReference>
<dbReference type="Gene3D" id="3.40.640.10">
    <property type="entry name" value="Type I PLP-dependent aspartate aminotransferase-like (Major domain)"/>
    <property type="match status" value="1"/>
</dbReference>
<dbReference type="InterPro" id="IPR000192">
    <property type="entry name" value="Aminotrans_V_dom"/>
</dbReference>
<dbReference type="InterPro" id="IPR015424">
    <property type="entry name" value="PyrdxlP-dep_Trfase"/>
</dbReference>
<dbReference type="InterPro" id="IPR015421">
    <property type="entry name" value="PyrdxlP-dep_Trfase_major"/>
</dbReference>
<dbReference type="InterPro" id="IPR015422">
    <property type="entry name" value="PyrdxlP-dep_Trfase_small"/>
</dbReference>
<dbReference type="InterPro" id="IPR024169">
    <property type="entry name" value="SP_NH2Trfase/AEP_transaminase"/>
</dbReference>
<dbReference type="PANTHER" id="PTHR21152:SF40">
    <property type="entry name" value="ALANINE--GLYOXYLATE AMINOTRANSFERASE"/>
    <property type="match status" value="1"/>
</dbReference>
<dbReference type="PANTHER" id="PTHR21152">
    <property type="entry name" value="AMINOTRANSFERASE CLASS V"/>
    <property type="match status" value="1"/>
</dbReference>
<dbReference type="Pfam" id="PF00266">
    <property type="entry name" value="Aminotran_5"/>
    <property type="match status" value="1"/>
</dbReference>
<dbReference type="PIRSF" id="PIRSF000524">
    <property type="entry name" value="SPT"/>
    <property type="match status" value="1"/>
</dbReference>
<dbReference type="SUPFAM" id="SSF53383">
    <property type="entry name" value="PLP-dependent transferases"/>
    <property type="match status" value="1"/>
</dbReference>